<proteinExistence type="evidence at protein level"/>
<name>ODP2_MYCPN</name>
<organism>
    <name type="scientific">Mycoplasma pneumoniae (strain ATCC 29342 / M129 / Subtype 1)</name>
    <name type="common">Mycoplasmoides pneumoniae</name>
    <dbReference type="NCBI Taxonomy" id="272634"/>
    <lineage>
        <taxon>Bacteria</taxon>
        <taxon>Bacillati</taxon>
        <taxon>Mycoplasmatota</taxon>
        <taxon>Mycoplasmoidales</taxon>
        <taxon>Mycoplasmoidaceae</taxon>
        <taxon>Mycoplasmoides</taxon>
    </lineage>
</organism>
<comment type="function">
    <text evidence="1">The pyruvate dehydrogenase complex catalyzes the overall conversion of pyruvate to acetyl-CoA and CO(2). It contains multiple copies of three enzymatic components: pyruvate dehydrogenase (E1), dihydrolipoamide acetyltransferase (E2) and lipoamide dehydrogenase (E3) (By similarity).</text>
</comment>
<comment type="catalytic activity">
    <reaction>
        <text>N(6)-[(R)-dihydrolipoyl]-L-lysyl-[protein] + acetyl-CoA = N(6)-[(R)-S(8)-acetyldihydrolipoyl]-L-lysyl-[protein] + CoA</text>
        <dbReference type="Rhea" id="RHEA:17017"/>
        <dbReference type="Rhea" id="RHEA-COMP:10475"/>
        <dbReference type="Rhea" id="RHEA-COMP:10478"/>
        <dbReference type="ChEBI" id="CHEBI:57287"/>
        <dbReference type="ChEBI" id="CHEBI:57288"/>
        <dbReference type="ChEBI" id="CHEBI:83100"/>
        <dbReference type="ChEBI" id="CHEBI:83111"/>
        <dbReference type="EC" id="2.3.1.12"/>
    </reaction>
</comment>
<comment type="cofactor">
    <cofactor evidence="1">
        <name>(R)-lipoate</name>
        <dbReference type="ChEBI" id="CHEBI:83088"/>
    </cofactor>
    <text evidence="1">Binds 1 lipoyl cofactor covalently.</text>
</comment>
<comment type="subunit">
    <text evidence="1">Forms a 24-polypeptide structural core with octahedral symmetry.</text>
</comment>
<comment type="interaction">
    <interactant intactId="EBI-2259593">
        <id>P75392</id>
    </interactant>
    <interactant intactId="EBI-1220319">
        <id>P02751</id>
        <label>FN1</label>
    </interactant>
    <organismsDiffer>true</organismsDiffer>
    <experiments>2</experiments>
</comment>
<comment type="interaction">
    <interactant intactId="EBI-2259593">
        <id>P75392</id>
    </interactant>
    <interactant intactId="EBI-1058602">
        <id>P02788</id>
        <label>LTF</label>
    </interactant>
    <organismsDiffer>true</organismsDiffer>
    <experiments>3</experiments>
</comment>
<comment type="interaction">
    <interactant intactId="EBI-2259593">
        <id>P75392</id>
    </interactant>
    <interactant intactId="EBI-999394">
        <id>P00747</id>
        <label>PLG</label>
    </interactant>
    <organismsDiffer>true</organismsDiffer>
    <experiments>5</experiments>
</comment>
<comment type="similarity">
    <text evidence="5">Belongs to the 2-oxoacid dehydrogenase family.</text>
</comment>
<keyword id="KW-0012">Acyltransferase</keyword>
<keyword id="KW-0450">Lipoyl</keyword>
<keyword id="KW-1185">Reference proteome</keyword>
<keyword id="KW-0808">Transferase</keyword>
<accession>P75392</accession>
<evidence type="ECO:0000250" key="1"/>
<evidence type="ECO:0000255" key="2"/>
<evidence type="ECO:0000255" key="3">
    <source>
        <dbReference type="PROSITE-ProRule" id="PRU01066"/>
    </source>
</evidence>
<evidence type="ECO:0000256" key="4">
    <source>
        <dbReference type="SAM" id="MobiDB-lite"/>
    </source>
</evidence>
<evidence type="ECO:0000305" key="5"/>
<dbReference type="EC" id="2.3.1.12"/>
<dbReference type="EMBL" id="U00089">
    <property type="protein sequence ID" value="AAB96095.1"/>
    <property type="molecule type" value="Genomic_DNA"/>
</dbReference>
<dbReference type="PIR" id="S73773">
    <property type="entry name" value="S73773"/>
</dbReference>
<dbReference type="RefSeq" id="NP_110079.1">
    <property type="nucleotide sequence ID" value="NC_000912.1"/>
</dbReference>
<dbReference type="RefSeq" id="WP_010874747.1">
    <property type="nucleotide sequence ID" value="NZ_OU342337.1"/>
</dbReference>
<dbReference type="SMR" id="P75392"/>
<dbReference type="IntAct" id="P75392">
    <property type="interactions" value="5"/>
</dbReference>
<dbReference type="STRING" id="272634.MPN_391"/>
<dbReference type="EnsemblBacteria" id="AAB96095">
    <property type="protein sequence ID" value="AAB96095"/>
    <property type="gene ID" value="MPN_391"/>
</dbReference>
<dbReference type="KEGG" id="mpn:MPN_391"/>
<dbReference type="PATRIC" id="fig|272634.6.peg.422"/>
<dbReference type="HOGENOM" id="CLU_016733_10_0_14"/>
<dbReference type="OrthoDB" id="9805770at2"/>
<dbReference type="BioCyc" id="MetaCyc:MONOMER-584"/>
<dbReference type="BioCyc" id="MPNE272634:G1GJ3-618-MONOMER"/>
<dbReference type="Proteomes" id="UP000000808">
    <property type="component" value="Chromosome"/>
</dbReference>
<dbReference type="GO" id="GO:0009986">
    <property type="term" value="C:cell surface"/>
    <property type="evidence" value="ECO:0000314"/>
    <property type="project" value="AgBase"/>
</dbReference>
<dbReference type="GO" id="GO:0005829">
    <property type="term" value="C:cytosol"/>
    <property type="evidence" value="ECO:0000314"/>
    <property type="project" value="AgBase"/>
</dbReference>
<dbReference type="GO" id="GO:0016020">
    <property type="term" value="C:membrane"/>
    <property type="evidence" value="ECO:0000314"/>
    <property type="project" value="AgBase"/>
</dbReference>
<dbReference type="GO" id="GO:0004742">
    <property type="term" value="F:dihydrolipoyllysine-residue acetyltransferase activity"/>
    <property type="evidence" value="ECO:0007669"/>
    <property type="project" value="UniProtKB-EC"/>
</dbReference>
<dbReference type="GO" id="GO:0031405">
    <property type="term" value="F:lipoic acid binding"/>
    <property type="evidence" value="ECO:0007669"/>
    <property type="project" value="TreeGrafter"/>
</dbReference>
<dbReference type="CDD" id="cd06849">
    <property type="entry name" value="lipoyl_domain"/>
    <property type="match status" value="1"/>
</dbReference>
<dbReference type="FunFam" id="2.40.50.100:FF:000114">
    <property type="entry name" value="Dihydrolipoamide acetyltransferase component of pyruvate dehydrogenase complex"/>
    <property type="match status" value="1"/>
</dbReference>
<dbReference type="FunFam" id="3.30.559.10:FF:000117">
    <property type="entry name" value="Dihydrolipoyllysine-residue acetyltransferase component of pyruvate dehydrogenase complex"/>
    <property type="match status" value="1"/>
</dbReference>
<dbReference type="Gene3D" id="2.40.50.100">
    <property type="match status" value="1"/>
</dbReference>
<dbReference type="Gene3D" id="3.30.559.10">
    <property type="entry name" value="Chloramphenicol acetyltransferase-like domain"/>
    <property type="match status" value="1"/>
</dbReference>
<dbReference type="InterPro" id="IPR003016">
    <property type="entry name" value="2-oxoA_DH_lipoyl-BS"/>
</dbReference>
<dbReference type="InterPro" id="IPR001078">
    <property type="entry name" value="2-oxoacid_DH_actylTfrase"/>
</dbReference>
<dbReference type="InterPro" id="IPR050743">
    <property type="entry name" value="2-oxoacid_DH_E2_comp"/>
</dbReference>
<dbReference type="InterPro" id="IPR000089">
    <property type="entry name" value="Biotin_lipoyl"/>
</dbReference>
<dbReference type="InterPro" id="IPR023213">
    <property type="entry name" value="CAT-like_dom_sf"/>
</dbReference>
<dbReference type="InterPro" id="IPR011053">
    <property type="entry name" value="Single_hybrid_motif"/>
</dbReference>
<dbReference type="PANTHER" id="PTHR43178">
    <property type="entry name" value="DIHYDROLIPOAMIDE ACETYLTRANSFERASE COMPONENT OF PYRUVATE DEHYDROGENASE COMPLEX"/>
    <property type="match status" value="1"/>
</dbReference>
<dbReference type="PANTHER" id="PTHR43178:SF5">
    <property type="entry name" value="LIPOAMIDE ACYLTRANSFERASE COMPONENT OF BRANCHED-CHAIN ALPHA-KETO ACID DEHYDROGENASE COMPLEX, MITOCHONDRIAL"/>
    <property type="match status" value="1"/>
</dbReference>
<dbReference type="Pfam" id="PF00198">
    <property type="entry name" value="2-oxoacid_dh"/>
    <property type="match status" value="1"/>
</dbReference>
<dbReference type="Pfam" id="PF00364">
    <property type="entry name" value="Biotin_lipoyl"/>
    <property type="match status" value="1"/>
</dbReference>
<dbReference type="SUPFAM" id="SSF52777">
    <property type="entry name" value="CoA-dependent acyltransferases"/>
    <property type="match status" value="1"/>
</dbReference>
<dbReference type="SUPFAM" id="SSF51230">
    <property type="entry name" value="Single hybrid motif"/>
    <property type="match status" value="1"/>
</dbReference>
<dbReference type="PROSITE" id="PS50968">
    <property type="entry name" value="BIOTINYL_LIPOYL"/>
    <property type="match status" value="1"/>
</dbReference>
<dbReference type="PROSITE" id="PS00189">
    <property type="entry name" value="LIPOYL"/>
    <property type="match status" value="1"/>
</dbReference>
<feature type="chain" id="PRO_0000162282" description="Dihydrolipoyllysine-residue acetyltransferase component of pyruvate dehydrogenase complex">
    <location>
        <begin position="1"/>
        <end position="402"/>
    </location>
</feature>
<feature type="domain" description="Lipoyl-binding" evidence="3">
    <location>
        <begin position="2"/>
        <end position="77"/>
    </location>
</feature>
<feature type="region of interest" description="Disordered" evidence="4">
    <location>
        <begin position="82"/>
        <end position="110"/>
    </location>
</feature>
<feature type="region of interest" description="Disordered" evidence="4">
    <location>
        <begin position="143"/>
        <end position="172"/>
    </location>
</feature>
<feature type="compositionally biased region" description="Pro residues" evidence="4">
    <location>
        <begin position="87"/>
        <end position="107"/>
    </location>
</feature>
<feature type="compositionally biased region" description="Pro residues" evidence="4">
    <location>
        <begin position="143"/>
        <end position="162"/>
    </location>
</feature>
<feature type="active site" evidence="2">
    <location>
        <position position="374"/>
    </location>
</feature>
<feature type="modified residue" description="N6-lipoyllysine" evidence="1 3">
    <location>
        <position position="43"/>
    </location>
</feature>
<protein>
    <recommendedName>
        <fullName>Dihydrolipoyllysine-residue acetyltransferase component of pyruvate dehydrogenase complex</fullName>
        <ecNumber>2.3.1.12</ecNumber>
    </recommendedName>
    <alternativeName>
        <fullName>Dihydrolipoamide acetyltransferase component of pyruvate dehydrogenase complex</fullName>
    </alternativeName>
    <alternativeName>
        <fullName>E2</fullName>
    </alternativeName>
</protein>
<gene>
    <name type="primary">pdhC</name>
    <name type="ordered locus">MPN_391</name>
    <name type="ORF">MP447</name>
</gene>
<reference key="1">
    <citation type="journal article" date="1996" name="Nucleic Acids Res.">
        <title>Complete sequence analysis of the genome of the bacterium Mycoplasma pneumoniae.</title>
        <authorList>
            <person name="Himmelreich R."/>
            <person name="Hilbert H."/>
            <person name="Plagens H."/>
            <person name="Pirkl E."/>
            <person name="Li B.-C."/>
            <person name="Herrmann R."/>
        </authorList>
    </citation>
    <scope>NUCLEOTIDE SEQUENCE [LARGE SCALE GENOMIC DNA]</scope>
    <source>
        <strain>ATCC 29342 / M129 / Subtype 1</strain>
    </source>
</reference>
<sequence>MANEFKFTDVGEGLHEGKVTEILKKVGDTIKVDEALFVVETDKVTTELPSPYAGVITAITTNVGDVVHIGQVMAVIDDGAGAAAPAAPQPVSAPAPAPTPTFTPTPAPVTTEPVVEEAGASVVGEIKVSNSVFPIFGVQPSAPQPTPAPVVQPTSAPTPTPAPASAAAPSGEETIAITTMRKAIAEAMVKSHENIPATILTFYVNATKLKQYRESVNGLALSKYNMKISFFAFFVKAIVNALKKFPVFNGRYDKERNLIVLNKDVNVGIAVDTPDGLIVPNIKQAQTKSVVDIAKDIVDLANRARSKQIKLPDLSKGTISVTNFGSLGAAFGTPIIKHPEMCIVATGNMEERVVRAEGGVAVHTILPLTIAADHRWVDGADVGRFGKEIAKQIEELIDLEVA</sequence>